<protein>
    <recommendedName>
        <fullName>Peptidyl-prolyl cis-trans isomerase FKBP12</fullName>
        <shortName>PPIase FKBP12</shortName>
        <ecNumber>5.2.1.8</ecNumber>
    </recommendedName>
    <alternativeName>
        <fullName>12 kDa FK506-binding protein</fullName>
        <shortName>12 kDa FKBP</shortName>
    </alternativeName>
    <alternativeName>
        <fullName>FK506-binding protein 12</fullName>
        <shortName>AtFKBP12</shortName>
    </alternativeName>
    <alternativeName>
        <fullName>FKBP-12</fullName>
    </alternativeName>
    <alternativeName>
        <fullName>Immunophilin FKBP12</fullName>
    </alternativeName>
    <alternativeName>
        <fullName>Rotamase</fullName>
    </alternativeName>
</protein>
<gene>
    <name type="primary">FKBP12</name>
    <name type="synonym">FKP12</name>
    <name type="ordered locus">At5g64350</name>
    <name type="ORF">MSJ1.19</name>
</gene>
<sequence length="112" mass="11988">MGVEKQVIRPGNGPKPAPGQTVTVHCTGFGKDGDLSQKFWSTKDEGQKPFSFQIGKGAVIKGWDEGVIGMQIGEVARLRCSSDYAYGAGGFPAWGIQPNSVLDFEIEVLSVQ</sequence>
<dbReference type="EC" id="5.2.1.8"/>
<dbReference type="EMBL" id="U96924">
    <property type="protein sequence ID" value="AAB57847.1"/>
    <property type="molecule type" value="mRNA"/>
</dbReference>
<dbReference type="EMBL" id="AB008268">
    <property type="protein sequence ID" value="BAB09866.1"/>
    <property type="molecule type" value="Genomic_DNA"/>
</dbReference>
<dbReference type="EMBL" id="CP002688">
    <property type="protein sequence ID" value="AED97876.1"/>
    <property type="molecule type" value="Genomic_DNA"/>
</dbReference>
<dbReference type="EMBL" id="AY059928">
    <property type="protein sequence ID" value="AAL24410.1"/>
    <property type="molecule type" value="mRNA"/>
</dbReference>
<dbReference type="EMBL" id="AY081564">
    <property type="protein sequence ID" value="AAM10126.1"/>
    <property type="molecule type" value="mRNA"/>
</dbReference>
<dbReference type="EMBL" id="AY084289">
    <property type="protein sequence ID" value="AAM60880.1"/>
    <property type="molecule type" value="mRNA"/>
</dbReference>
<dbReference type="RefSeq" id="NP_201240.1">
    <property type="nucleotide sequence ID" value="NM_125831.3"/>
</dbReference>
<dbReference type="SMR" id="Q8LGG0"/>
<dbReference type="BioGRID" id="21798">
    <property type="interactions" value="4"/>
</dbReference>
<dbReference type="FunCoup" id="Q8LGG0">
    <property type="interactions" value="2204"/>
</dbReference>
<dbReference type="IntAct" id="Q8LGG0">
    <property type="interactions" value="4"/>
</dbReference>
<dbReference type="STRING" id="3702.Q8LGG0"/>
<dbReference type="PaxDb" id="3702-AT5G64350.1"/>
<dbReference type="ProteomicsDB" id="228907"/>
<dbReference type="EnsemblPlants" id="AT5G64350.1">
    <property type="protein sequence ID" value="AT5G64350.1"/>
    <property type="gene ID" value="AT5G64350"/>
</dbReference>
<dbReference type="GeneID" id="836556"/>
<dbReference type="Gramene" id="AT5G64350.1">
    <property type="protein sequence ID" value="AT5G64350.1"/>
    <property type="gene ID" value="AT5G64350"/>
</dbReference>
<dbReference type="KEGG" id="ath:AT5G64350"/>
<dbReference type="Araport" id="AT5G64350"/>
<dbReference type="TAIR" id="AT5G64350">
    <property type="gene designation" value="FKBP12"/>
</dbReference>
<dbReference type="eggNOG" id="KOG0544">
    <property type="taxonomic scope" value="Eukaryota"/>
</dbReference>
<dbReference type="HOGENOM" id="CLU_013615_12_2_1"/>
<dbReference type="InParanoid" id="Q8LGG0"/>
<dbReference type="OMA" id="EQFDASW"/>
<dbReference type="OrthoDB" id="1902587at2759"/>
<dbReference type="PhylomeDB" id="Q8LGG0"/>
<dbReference type="PRO" id="PR:Q8LGG0"/>
<dbReference type="Proteomes" id="UP000006548">
    <property type="component" value="Chromosome 5"/>
</dbReference>
<dbReference type="ExpressionAtlas" id="Q8LGG0">
    <property type="expression patterns" value="baseline and differential"/>
</dbReference>
<dbReference type="GO" id="GO:0005829">
    <property type="term" value="C:cytosol"/>
    <property type="evidence" value="ECO:0007005"/>
    <property type="project" value="TAIR"/>
</dbReference>
<dbReference type="GO" id="GO:0009536">
    <property type="term" value="C:plastid"/>
    <property type="evidence" value="ECO:0007005"/>
    <property type="project" value="TAIR"/>
</dbReference>
<dbReference type="GO" id="GO:0003755">
    <property type="term" value="F:peptidyl-prolyl cis-trans isomerase activity"/>
    <property type="evidence" value="ECO:0007669"/>
    <property type="project" value="UniProtKB-KW"/>
</dbReference>
<dbReference type="FunFam" id="3.10.50.40:FF:000031">
    <property type="entry name" value="Peptidylprolyl isomerase"/>
    <property type="match status" value="1"/>
</dbReference>
<dbReference type="Gene3D" id="3.10.50.40">
    <property type="match status" value="1"/>
</dbReference>
<dbReference type="InterPro" id="IPR050689">
    <property type="entry name" value="FKBP-type_PPIase"/>
</dbReference>
<dbReference type="InterPro" id="IPR046357">
    <property type="entry name" value="PPIase_dom_sf"/>
</dbReference>
<dbReference type="InterPro" id="IPR001179">
    <property type="entry name" value="PPIase_FKBP_dom"/>
</dbReference>
<dbReference type="PANTHER" id="PTHR10516:SF443">
    <property type="entry name" value="FK506-BINDING PROTEIN 59-RELATED"/>
    <property type="match status" value="1"/>
</dbReference>
<dbReference type="PANTHER" id="PTHR10516">
    <property type="entry name" value="PEPTIDYL-PROLYL CIS-TRANS ISOMERASE"/>
    <property type="match status" value="1"/>
</dbReference>
<dbReference type="Pfam" id="PF00254">
    <property type="entry name" value="FKBP_C"/>
    <property type="match status" value="1"/>
</dbReference>
<dbReference type="SUPFAM" id="SSF54534">
    <property type="entry name" value="FKBP-like"/>
    <property type="match status" value="1"/>
</dbReference>
<dbReference type="PROSITE" id="PS50059">
    <property type="entry name" value="FKBP_PPIASE"/>
    <property type="match status" value="1"/>
</dbReference>
<reference key="1">
    <citation type="journal article" date="1998" name="Plant J.">
        <title>Molecular characterization of a plant FKBP12 that does not mediate action of FK506 and rapamycin.</title>
        <authorList>
            <person name="Xu Q."/>
            <person name="Liang S."/>
            <person name="Kudla J."/>
            <person name="Luan S."/>
        </authorList>
    </citation>
    <scope>NUCLEOTIDE SEQUENCE [MRNA]</scope>
    <source>
        <strain>cv. Columbia</strain>
    </source>
</reference>
<reference key="2">
    <citation type="journal article" date="1997" name="DNA Res.">
        <title>Structural analysis of Arabidopsis thaliana chromosome 5. III. Sequence features of the regions of 1,191,918 bp covered by seventeen physically assigned P1 clones.</title>
        <authorList>
            <person name="Nakamura Y."/>
            <person name="Sato S."/>
            <person name="Kaneko T."/>
            <person name="Kotani H."/>
            <person name="Asamizu E."/>
            <person name="Miyajima N."/>
            <person name="Tabata S."/>
        </authorList>
    </citation>
    <scope>NUCLEOTIDE SEQUENCE [LARGE SCALE GENOMIC DNA]</scope>
    <source>
        <strain>cv. Columbia</strain>
    </source>
</reference>
<reference key="3">
    <citation type="journal article" date="2017" name="Plant J.">
        <title>Araport11: a complete reannotation of the Arabidopsis thaliana reference genome.</title>
        <authorList>
            <person name="Cheng C.Y."/>
            <person name="Krishnakumar V."/>
            <person name="Chan A.P."/>
            <person name="Thibaud-Nissen F."/>
            <person name="Schobel S."/>
            <person name="Town C.D."/>
        </authorList>
    </citation>
    <scope>GENOME REANNOTATION</scope>
    <source>
        <strain>cv. Columbia</strain>
    </source>
</reference>
<reference key="4">
    <citation type="journal article" date="2003" name="Science">
        <title>Empirical analysis of transcriptional activity in the Arabidopsis genome.</title>
        <authorList>
            <person name="Yamada K."/>
            <person name="Lim J."/>
            <person name="Dale J.M."/>
            <person name="Chen H."/>
            <person name="Shinn P."/>
            <person name="Palm C.J."/>
            <person name="Southwick A.M."/>
            <person name="Wu H.C."/>
            <person name="Kim C.J."/>
            <person name="Nguyen M."/>
            <person name="Pham P.K."/>
            <person name="Cheuk R.F."/>
            <person name="Karlin-Newmann G."/>
            <person name="Liu S.X."/>
            <person name="Lam B."/>
            <person name="Sakano H."/>
            <person name="Wu T."/>
            <person name="Yu G."/>
            <person name="Miranda M."/>
            <person name="Quach H.L."/>
            <person name="Tripp M."/>
            <person name="Chang C.H."/>
            <person name="Lee J.M."/>
            <person name="Toriumi M.J."/>
            <person name="Chan M.M."/>
            <person name="Tang C.C."/>
            <person name="Onodera C.S."/>
            <person name="Deng J.M."/>
            <person name="Akiyama K."/>
            <person name="Ansari Y."/>
            <person name="Arakawa T."/>
            <person name="Banh J."/>
            <person name="Banno F."/>
            <person name="Bowser L."/>
            <person name="Brooks S.Y."/>
            <person name="Carninci P."/>
            <person name="Chao Q."/>
            <person name="Choy N."/>
            <person name="Enju A."/>
            <person name="Goldsmith A.D."/>
            <person name="Gurjal M."/>
            <person name="Hansen N.F."/>
            <person name="Hayashizaki Y."/>
            <person name="Johnson-Hopson C."/>
            <person name="Hsuan V.W."/>
            <person name="Iida K."/>
            <person name="Karnes M."/>
            <person name="Khan S."/>
            <person name="Koesema E."/>
            <person name="Ishida J."/>
            <person name="Jiang P.X."/>
            <person name="Jones T."/>
            <person name="Kawai J."/>
            <person name="Kamiya A."/>
            <person name="Meyers C."/>
            <person name="Nakajima M."/>
            <person name="Narusaka M."/>
            <person name="Seki M."/>
            <person name="Sakurai T."/>
            <person name="Satou M."/>
            <person name="Tamse R."/>
            <person name="Vaysberg M."/>
            <person name="Wallender E.K."/>
            <person name="Wong C."/>
            <person name="Yamamura Y."/>
            <person name="Yuan S."/>
            <person name="Shinozaki K."/>
            <person name="Davis R.W."/>
            <person name="Theologis A."/>
            <person name="Ecker J.R."/>
        </authorList>
    </citation>
    <scope>NUCLEOTIDE SEQUENCE [LARGE SCALE MRNA]</scope>
    <source>
        <strain>cv. Columbia</strain>
    </source>
</reference>
<reference key="5">
    <citation type="submission" date="2002-03" db="EMBL/GenBank/DDBJ databases">
        <title>Full-length cDNA from Arabidopsis thaliana.</title>
        <authorList>
            <person name="Brover V.V."/>
            <person name="Troukhan M.E."/>
            <person name="Alexandrov N.A."/>
            <person name="Lu Y.-P."/>
            <person name="Flavell R.B."/>
            <person name="Feldmann K.A."/>
        </authorList>
    </citation>
    <scope>NUCLEOTIDE SEQUENCE [LARGE SCALE MRNA]</scope>
</reference>
<reference key="6">
    <citation type="journal article" date="1998" name="Plant J.">
        <title>An Arabidopsis immunophilin, AtFKBP12, binds to AtFIP37 (FKBP interacting protein) in an interaction that is disrupted by FK506.</title>
        <authorList>
            <person name="Faure J.-D."/>
            <person name="Gingerich D."/>
            <person name="Howell S.H."/>
        </authorList>
    </citation>
    <scope>INTERACTION WITH FIP37 AND FK506</scope>
    <source>
        <strain>cv. Columbia</strain>
    </source>
</reference>
<reference key="7">
    <citation type="journal article" date="2004" name="Plant Physiol.">
        <title>Immunophilins and parvulins. Superfamily of peptidyl prolyl isomerases in Arabidopsis.</title>
        <authorList>
            <person name="He Z."/>
            <person name="Li L."/>
            <person name="Luan S."/>
        </authorList>
    </citation>
    <scope>GENE FAMILY</scope>
    <scope>NOMENCLATURE</scope>
</reference>
<reference key="8">
    <citation type="journal article" date="2012" name="J. Biol. Chem.">
        <title>Rapamycin and glucose-target of rapamycin (TOR) protein signaling in plants.</title>
        <authorList>
            <person name="Xiong Y."/>
            <person name="Sheen J."/>
        </authorList>
    </citation>
    <scope>FUNCTION</scope>
    <scope>INTERACTION WITH TOR</scope>
</reference>
<name>FKB12_ARATH</name>
<accession>Q8LGG0</accession>
<accession>O04263</accession>
<proteinExistence type="evidence at protein level"/>
<comment type="function">
    <text evidence="1 4">PPIases accelerate the folding of proteins. It catalyzes the cis-trans isomerization of proline imidic peptide bonds in oligopeptides (By similarity). Mediates rapamycin inactivation of TOR protein kinase activity.</text>
</comment>
<comment type="catalytic activity">
    <reaction>
        <text>[protein]-peptidylproline (omega=180) = [protein]-peptidylproline (omega=0)</text>
        <dbReference type="Rhea" id="RHEA:16237"/>
        <dbReference type="Rhea" id="RHEA-COMP:10747"/>
        <dbReference type="Rhea" id="RHEA-COMP:10748"/>
        <dbReference type="ChEBI" id="CHEBI:83833"/>
        <dbReference type="ChEBI" id="CHEBI:83834"/>
        <dbReference type="EC" id="5.2.1.8"/>
    </reaction>
</comment>
<comment type="subunit">
    <text evidence="4 5">Interacts with FIP37 and with the immunosuppressive drug FK506. Its interaction with FIP37 is inhibited by FK506. Interacts with TOR in a rapamycin-dependent manner.</text>
</comment>
<comment type="interaction">
    <interactant intactId="EBI-1641228">
        <id>Q8LGG0</id>
    </interactant>
    <interactant intactId="EBI-1641243">
        <id>Q9ZSZ8</id>
        <label>FIP37</label>
    </interactant>
    <organismsDiffer>false</organismsDiffer>
    <experiments>3</experiments>
</comment>
<comment type="subcellular location">
    <subcellularLocation>
        <location evidence="6">Cytoplasm</location>
    </subcellularLocation>
</comment>
<comment type="similarity">
    <text evidence="6">Belongs to the FKBP-type PPIase family.</text>
</comment>
<keyword id="KW-0963">Cytoplasm</keyword>
<keyword id="KW-1015">Disulfide bond</keyword>
<keyword id="KW-0413">Isomerase</keyword>
<keyword id="KW-1185">Reference proteome</keyword>
<keyword id="KW-0697">Rotamase</keyword>
<organism>
    <name type="scientific">Arabidopsis thaliana</name>
    <name type="common">Mouse-ear cress</name>
    <dbReference type="NCBI Taxonomy" id="3702"/>
    <lineage>
        <taxon>Eukaryota</taxon>
        <taxon>Viridiplantae</taxon>
        <taxon>Streptophyta</taxon>
        <taxon>Embryophyta</taxon>
        <taxon>Tracheophyta</taxon>
        <taxon>Spermatophyta</taxon>
        <taxon>Magnoliopsida</taxon>
        <taxon>eudicotyledons</taxon>
        <taxon>Gunneridae</taxon>
        <taxon>Pentapetalae</taxon>
        <taxon>rosids</taxon>
        <taxon>malvids</taxon>
        <taxon>Brassicales</taxon>
        <taxon>Brassicaceae</taxon>
        <taxon>Camelineae</taxon>
        <taxon>Arabidopsis</taxon>
    </lineage>
</organism>
<feature type="chain" id="PRO_0000075300" description="Peptidyl-prolyl cis-trans isomerase FKBP12">
    <location>
        <begin position="1"/>
        <end position="112"/>
    </location>
</feature>
<feature type="domain" description="PPIase FKBP-type" evidence="2">
    <location>
        <begin position="19"/>
        <end position="112"/>
    </location>
</feature>
<feature type="region of interest" description="Disordered" evidence="3">
    <location>
        <begin position="1"/>
        <end position="26"/>
    </location>
</feature>
<feature type="disulfide bond" evidence="1">
    <location>
        <begin position="26"/>
        <end position="80"/>
    </location>
</feature>
<feature type="sequence conflict" description="In Ref. 5; AAM60880." evidence="6" ref="5">
    <original>V</original>
    <variation>L</variation>
    <location>
        <position position="111"/>
    </location>
</feature>
<evidence type="ECO:0000250" key="1"/>
<evidence type="ECO:0000255" key="2">
    <source>
        <dbReference type="PROSITE-ProRule" id="PRU00277"/>
    </source>
</evidence>
<evidence type="ECO:0000256" key="3">
    <source>
        <dbReference type="SAM" id="MobiDB-lite"/>
    </source>
</evidence>
<evidence type="ECO:0000269" key="4">
    <source>
    </source>
</evidence>
<evidence type="ECO:0000269" key="5">
    <source>
    </source>
</evidence>
<evidence type="ECO:0000305" key="6"/>